<proteinExistence type="inferred from homology"/>
<comment type="catalytic activity">
    <reaction evidence="1">
        <text>diphosphate + H2O = 2 phosphate + H(+)</text>
        <dbReference type="Rhea" id="RHEA:24576"/>
        <dbReference type="ChEBI" id="CHEBI:15377"/>
        <dbReference type="ChEBI" id="CHEBI:15378"/>
        <dbReference type="ChEBI" id="CHEBI:33019"/>
        <dbReference type="ChEBI" id="CHEBI:43474"/>
        <dbReference type="EC" id="3.6.1.1"/>
    </reaction>
</comment>
<comment type="cofactor">
    <cofactor evidence="1">
        <name>Mn(2+)</name>
        <dbReference type="ChEBI" id="CHEBI:29035"/>
    </cofactor>
    <text evidence="1">Binds 2 manganese ions per subunit.</text>
</comment>
<comment type="subcellular location">
    <subcellularLocation>
        <location evidence="1">Cytoplasm</location>
    </subcellularLocation>
</comment>
<comment type="similarity">
    <text evidence="1">Belongs to the PPase class C family.</text>
</comment>
<gene>
    <name evidence="1" type="primary">ppaC</name>
    <name type="ordered locus">SERP1455</name>
</gene>
<sequence length="309" mass="34207">MTKTFIFGHKNPDTDAISSALIMADFEQQTGNTEAKAYRLGEISAETQFALDHFNVEAPELLNEDLKGQDVILVDHNEFQQSADTISNATIKHVIDHHRISNFETAGPLYYRAEPVGCSATILYKMYKERGFEIKPEIAGLMISAIISDSLLFKSPTCTKEDVDAAQALKDIANVDLEAYGLEMLKAGASTTDKSAETLVNMDAKSFNMGDYVTRIAQVNTVDIDEVLDRKEEFEKVMLEMSANEKYDLFVLVVTDIINSDSKILVVGAEKDKVGEAFKVQLDDGMAFLSGVVSRKKQVVPQITEVLTQ</sequence>
<feature type="chain" id="PRO_0000158586" description="Probable manganese-dependent inorganic pyrophosphatase">
    <location>
        <begin position="1"/>
        <end position="309"/>
    </location>
</feature>
<feature type="binding site" evidence="1">
    <location>
        <position position="9"/>
    </location>
    <ligand>
        <name>Mn(2+)</name>
        <dbReference type="ChEBI" id="CHEBI:29035"/>
        <label>1</label>
    </ligand>
</feature>
<feature type="binding site" evidence="1">
    <location>
        <position position="13"/>
    </location>
    <ligand>
        <name>Mn(2+)</name>
        <dbReference type="ChEBI" id="CHEBI:29035"/>
        <label>1</label>
    </ligand>
</feature>
<feature type="binding site" evidence="1">
    <location>
        <position position="15"/>
    </location>
    <ligand>
        <name>Mn(2+)</name>
        <dbReference type="ChEBI" id="CHEBI:29035"/>
        <label>2</label>
    </ligand>
</feature>
<feature type="binding site" evidence="1">
    <location>
        <position position="75"/>
    </location>
    <ligand>
        <name>Mn(2+)</name>
        <dbReference type="ChEBI" id="CHEBI:29035"/>
        <label>1</label>
    </ligand>
</feature>
<feature type="binding site" evidence="1">
    <location>
        <position position="75"/>
    </location>
    <ligand>
        <name>Mn(2+)</name>
        <dbReference type="ChEBI" id="CHEBI:29035"/>
        <label>2</label>
    </ligand>
</feature>
<feature type="binding site" evidence="1">
    <location>
        <position position="97"/>
    </location>
    <ligand>
        <name>Mn(2+)</name>
        <dbReference type="ChEBI" id="CHEBI:29035"/>
        <label>2</label>
    </ligand>
</feature>
<feature type="binding site" evidence="1">
    <location>
        <position position="149"/>
    </location>
    <ligand>
        <name>Mn(2+)</name>
        <dbReference type="ChEBI" id="CHEBI:29035"/>
        <label>2</label>
    </ligand>
</feature>
<dbReference type="EC" id="3.6.1.1" evidence="1"/>
<dbReference type="EMBL" id="CP000029">
    <property type="protein sequence ID" value="AAW54851.1"/>
    <property type="molecule type" value="Genomic_DNA"/>
</dbReference>
<dbReference type="RefSeq" id="WP_002494627.1">
    <property type="nucleotide sequence ID" value="NC_002976.3"/>
</dbReference>
<dbReference type="SMR" id="Q5HN17"/>
<dbReference type="STRING" id="176279.SERP1455"/>
<dbReference type="KEGG" id="ser:SERP1455"/>
<dbReference type="eggNOG" id="COG1227">
    <property type="taxonomic scope" value="Bacteria"/>
</dbReference>
<dbReference type="HOGENOM" id="CLU_025243_0_1_9"/>
<dbReference type="Proteomes" id="UP000000531">
    <property type="component" value="Chromosome"/>
</dbReference>
<dbReference type="GO" id="GO:0005737">
    <property type="term" value="C:cytoplasm"/>
    <property type="evidence" value="ECO:0007669"/>
    <property type="project" value="UniProtKB-SubCell"/>
</dbReference>
<dbReference type="GO" id="GO:0004427">
    <property type="term" value="F:inorganic diphosphate phosphatase activity"/>
    <property type="evidence" value="ECO:0007669"/>
    <property type="project" value="UniProtKB-UniRule"/>
</dbReference>
<dbReference type="GO" id="GO:0030145">
    <property type="term" value="F:manganese ion binding"/>
    <property type="evidence" value="ECO:0007669"/>
    <property type="project" value="UniProtKB-UniRule"/>
</dbReference>
<dbReference type="FunFam" id="3.10.310.20:FF:000001">
    <property type="entry name" value="Probable manganese-dependent inorganic pyrophosphatase"/>
    <property type="match status" value="1"/>
</dbReference>
<dbReference type="FunFam" id="3.90.1640.10:FF:000001">
    <property type="entry name" value="Probable manganese-dependent inorganic pyrophosphatase"/>
    <property type="match status" value="1"/>
</dbReference>
<dbReference type="Gene3D" id="3.10.310.20">
    <property type="entry name" value="DHHA2 domain"/>
    <property type="match status" value="1"/>
</dbReference>
<dbReference type="Gene3D" id="3.90.1640.10">
    <property type="entry name" value="inorganic pyrophosphatase (n-terminal core)"/>
    <property type="match status" value="1"/>
</dbReference>
<dbReference type="HAMAP" id="MF_00207">
    <property type="entry name" value="PPase_C"/>
    <property type="match status" value="1"/>
</dbReference>
<dbReference type="InterPro" id="IPR001667">
    <property type="entry name" value="DDH_dom"/>
</dbReference>
<dbReference type="InterPro" id="IPR038763">
    <property type="entry name" value="DHH_sf"/>
</dbReference>
<dbReference type="InterPro" id="IPR004097">
    <property type="entry name" value="DHHA2"/>
</dbReference>
<dbReference type="InterPro" id="IPR038222">
    <property type="entry name" value="DHHA2_dom_sf"/>
</dbReference>
<dbReference type="InterPro" id="IPR022934">
    <property type="entry name" value="Mn-dep_inorganic_PyrPase"/>
</dbReference>
<dbReference type="NCBIfam" id="NF003877">
    <property type="entry name" value="PRK05427.1"/>
    <property type="match status" value="1"/>
</dbReference>
<dbReference type="PANTHER" id="PTHR12112">
    <property type="entry name" value="BNIP - RELATED"/>
    <property type="match status" value="1"/>
</dbReference>
<dbReference type="PANTHER" id="PTHR12112:SF22">
    <property type="entry name" value="MANGANESE-DEPENDENT INORGANIC PYROPHOSPHATASE-RELATED"/>
    <property type="match status" value="1"/>
</dbReference>
<dbReference type="Pfam" id="PF01368">
    <property type="entry name" value="DHH"/>
    <property type="match status" value="1"/>
</dbReference>
<dbReference type="Pfam" id="PF02833">
    <property type="entry name" value="DHHA2"/>
    <property type="match status" value="1"/>
</dbReference>
<dbReference type="SMART" id="SM01131">
    <property type="entry name" value="DHHA2"/>
    <property type="match status" value="1"/>
</dbReference>
<dbReference type="SUPFAM" id="SSF64182">
    <property type="entry name" value="DHH phosphoesterases"/>
    <property type="match status" value="1"/>
</dbReference>
<evidence type="ECO:0000255" key="1">
    <source>
        <dbReference type="HAMAP-Rule" id="MF_00207"/>
    </source>
</evidence>
<name>PPAC_STAEQ</name>
<reference key="1">
    <citation type="journal article" date="2005" name="J. Bacteriol.">
        <title>Insights on evolution of virulence and resistance from the complete genome analysis of an early methicillin-resistant Staphylococcus aureus strain and a biofilm-producing methicillin-resistant Staphylococcus epidermidis strain.</title>
        <authorList>
            <person name="Gill S.R."/>
            <person name="Fouts D.E."/>
            <person name="Archer G.L."/>
            <person name="Mongodin E.F."/>
            <person name="DeBoy R.T."/>
            <person name="Ravel J."/>
            <person name="Paulsen I.T."/>
            <person name="Kolonay J.F."/>
            <person name="Brinkac L.M."/>
            <person name="Beanan M.J."/>
            <person name="Dodson R.J."/>
            <person name="Daugherty S.C."/>
            <person name="Madupu R."/>
            <person name="Angiuoli S.V."/>
            <person name="Durkin A.S."/>
            <person name="Haft D.H."/>
            <person name="Vamathevan J.J."/>
            <person name="Khouri H."/>
            <person name="Utterback T.R."/>
            <person name="Lee C."/>
            <person name="Dimitrov G."/>
            <person name="Jiang L."/>
            <person name="Qin H."/>
            <person name="Weidman J."/>
            <person name="Tran K."/>
            <person name="Kang K.H."/>
            <person name="Hance I.R."/>
            <person name="Nelson K.E."/>
            <person name="Fraser C.M."/>
        </authorList>
    </citation>
    <scope>NUCLEOTIDE SEQUENCE [LARGE SCALE GENOMIC DNA]</scope>
    <source>
        <strain>ATCC 35984 / DSM 28319 / BCRC 17069 / CCUG 31568 / BM 3577 / RP62A</strain>
    </source>
</reference>
<accession>Q5HN17</accession>
<organism>
    <name type="scientific">Staphylococcus epidermidis (strain ATCC 35984 / DSM 28319 / BCRC 17069 / CCUG 31568 / BM 3577 / RP62A)</name>
    <dbReference type="NCBI Taxonomy" id="176279"/>
    <lineage>
        <taxon>Bacteria</taxon>
        <taxon>Bacillati</taxon>
        <taxon>Bacillota</taxon>
        <taxon>Bacilli</taxon>
        <taxon>Bacillales</taxon>
        <taxon>Staphylococcaceae</taxon>
        <taxon>Staphylococcus</taxon>
    </lineage>
</organism>
<protein>
    <recommendedName>
        <fullName evidence="1">Probable manganese-dependent inorganic pyrophosphatase</fullName>
        <ecNumber evidence="1">3.6.1.1</ecNumber>
    </recommendedName>
    <alternativeName>
        <fullName evidence="1">Pyrophosphate phospho-hydrolase</fullName>
        <shortName evidence="1">PPase</shortName>
    </alternativeName>
</protein>
<keyword id="KW-0963">Cytoplasm</keyword>
<keyword id="KW-0378">Hydrolase</keyword>
<keyword id="KW-0464">Manganese</keyword>
<keyword id="KW-0479">Metal-binding</keyword>
<keyword id="KW-1185">Reference proteome</keyword>